<gene>
    <name type="primary">OAF3</name>
    <name type="ORF">C1Q_05113</name>
</gene>
<organism>
    <name type="scientific">Saccharomyces cerevisiae (strain JAY291)</name>
    <name type="common">Baker's yeast</name>
    <dbReference type="NCBI Taxonomy" id="574961"/>
    <lineage>
        <taxon>Eukaryota</taxon>
        <taxon>Fungi</taxon>
        <taxon>Dikarya</taxon>
        <taxon>Ascomycota</taxon>
        <taxon>Saccharomycotina</taxon>
        <taxon>Saccharomycetes</taxon>
        <taxon>Saccharomycetales</taxon>
        <taxon>Saccharomycetaceae</taxon>
        <taxon>Saccharomyces</taxon>
    </lineage>
</organism>
<reference key="1">
    <citation type="journal article" date="2009" name="Genome Res.">
        <title>Genome structure of a Saccharomyces cerevisiae strain widely used in bioethanol production.</title>
        <authorList>
            <person name="Argueso J.L."/>
            <person name="Carazzolle M.F."/>
            <person name="Mieczkowski P.A."/>
            <person name="Duarte F.M."/>
            <person name="Netto O.V.C."/>
            <person name="Missawa S.K."/>
            <person name="Galzerani F."/>
            <person name="Costa G.G.L."/>
            <person name="Vidal R.O."/>
            <person name="Noronha M.F."/>
            <person name="Dominska M."/>
            <person name="Andrietta M.G.S."/>
            <person name="Andrietta S.R."/>
            <person name="Cunha A.F."/>
            <person name="Gomes L.H."/>
            <person name="Tavares F.C.A."/>
            <person name="Alcarde A.R."/>
            <person name="Dietrich F.S."/>
            <person name="McCusker J.H."/>
            <person name="Petes T.D."/>
            <person name="Pereira G.A.G."/>
        </authorList>
    </citation>
    <scope>NUCLEOTIDE SEQUENCE [LARGE SCALE GENOMIC DNA]</scope>
    <source>
        <strain>JAY291</strain>
    </source>
</reference>
<proteinExistence type="inferred from homology"/>
<evidence type="ECO:0000250" key="1"/>
<evidence type="ECO:0000255" key="2">
    <source>
        <dbReference type="PROSITE-ProRule" id="PRU00227"/>
    </source>
</evidence>
<evidence type="ECO:0000256" key="3">
    <source>
        <dbReference type="SAM" id="MobiDB-lite"/>
    </source>
</evidence>
<evidence type="ECO:0000305" key="4"/>
<name>OAF3_YEAS2</name>
<keyword id="KW-0963">Cytoplasm</keyword>
<keyword id="KW-0238">DNA-binding</keyword>
<keyword id="KW-0479">Metal-binding</keyword>
<keyword id="KW-0496">Mitochondrion</keyword>
<keyword id="KW-0539">Nucleus</keyword>
<keyword id="KW-0678">Repressor</keyword>
<keyword id="KW-0804">Transcription</keyword>
<keyword id="KW-0805">Transcription regulation</keyword>
<keyword id="KW-0862">Zinc</keyword>
<accession>C7GX75</accession>
<protein>
    <recommendedName>
        <fullName>Oleate activated transcription factor 3</fullName>
    </recommendedName>
</protein>
<dbReference type="EMBL" id="ACFL01000410">
    <property type="protein sequence ID" value="EEU04592.1"/>
    <property type="molecule type" value="Genomic_DNA"/>
</dbReference>
<dbReference type="SMR" id="C7GX75"/>
<dbReference type="OrthoDB" id="19060at4893"/>
<dbReference type="Proteomes" id="UP000008073">
    <property type="component" value="Unassembled WGS sequence"/>
</dbReference>
<dbReference type="GO" id="GO:0005739">
    <property type="term" value="C:mitochondrion"/>
    <property type="evidence" value="ECO:0007669"/>
    <property type="project" value="UniProtKB-SubCell"/>
</dbReference>
<dbReference type="GO" id="GO:0005634">
    <property type="term" value="C:nucleus"/>
    <property type="evidence" value="ECO:0007669"/>
    <property type="project" value="UniProtKB-SubCell"/>
</dbReference>
<dbReference type="GO" id="GO:0000981">
    <property type="term" value="F:DNA-binding transcription factor activity, RNA polymerase II-specific"/>
    <property type="evidence" value="ECO:0007669"/>
    <property type="project" value="InterPro"/>
</dbReference>
<dbReference type="GO" id="GO:0000978">
    <property type="term" value="F:RNA polymerase II cis-regulatory region sequence-specific DNA binding"/>
    <property type="evidence" value="ECO:0007669"/>
    <property type="project" value="TreeGrafter"/>
</dbReference>
<dbReference type="GO" id="GO:0008270">
    <property type="term" value="F:zinc ion binding"/>
    <property type="evidence" value="ECO:0007669"/>
    <property type="project" value="InterPro"/>
</dbReference>
<dbReference type="GO" id="GO:0045944">
    <property type="term" value="P:positive regulation of transcription by RNA polymerase II"/>
    <property type="evidence" value="ECO:0007669"/>
    <property type="project" value="TreeGrafter"/>
</dbReference>
<dbReference type="CDD" id="cd00067">
    <property type="entry name" value="GAL4"/>
    <property type="match status" value="1"/>
</dbReference>
<dbReference type="Gene3D" id="4.10.240.10">
    <property type="entry name" value="Zn(2)-C6 fungal-type DNA-binding domain"/>
    <property type="match status" value="1"/>
</dbReference>
<dbReference type="InterPro" id="IPR050675">
    <property type="entry name" value="OAF3"/>
</dbReference>
<dbReference type="InterPro" id="IPR036864">
    <property type="entry name" value="Zn2-C6_fun-type_DNA-bd_sf"/>
</dbReference>
<dbReference type="InterPro" id="IPR001138">
    <property type="entry name" value="Zn2Cys6_DnaBD"/>
</dbReference>
<dbReference type="PANTHER" id="PTHR31069:SF33">
    <property type="entry name" value="OLEATE ACTIVATED TRANSCRIPTION FACTOR 3"/>
    <property type="match status" value="1"/>
</dbReference>
<dbReference type="PANTHER" id="PTHR31069">
    <property type="entry name" value="OLEATE-ACTIVATED TRANSCRIPTION FACTOR 1-RELATED"/>
    <property type="match status" value="1"/>
</dbReference>
<dbReference type="Pfam" id="PF00172">
    <property type="entry name" value="Zn_clus"/>
    <property type="match status" value="1"/>
</dbReference>
<dbReference type="SMART" id="SM00066">
    <property type="entry name" value="GAL4"/>
    <property type="match status" value="1"/>
</dbReference>
<dbReference type="SUPFAM" id="SSF57701">
    <property type="entry name" value="Zn2/Cys6 DNA-binding domain"/>
    <property type="match status" value="1"/>
</dbReference>
<dbReference type="PROSITE" id="PS00463">
    <property type="entry name" value="ZN2_CY6_FUNGAL_1"/>
    <property type="match status" value="1"/>
</dbReference>
<dbReference type="PROSITE" id="PS50048">
    <property type="entry name" value="ZN2_CY6_FUNGAL_2"/>
    <property type="match status" value="1"/>
</dbReference>
<sequence length="861" mass="101530">MTPKLGQKKRHRITVVCTNCKKRKSKCDRTKPCGTCVRLGDVDSCVYLIDSSGQPESSPSLNDADPLRKQSTPAERISPGFIKKRRSSQTRQDEDHWQRVRELESQSSLYYLPIHEETPFFIDLIPNGFYLETKRSADNLFGLFSDRAIENRDPYLQAMVTFRSIAIKKMMDKLGSNGNNVKNGSLPKSFEALSTFDADDERHISDDVVDKGNNCRMHQTIHKSLFNKFAQYRENNAKKFSSETILAKDYLPPLKILESEVLALFEEKIYNMIPIFDMKILRHEITIFYQNIVEKGNPISIKHYDHMVFCIILLIIKICRLSVQFSKLTPYIYPVLQEIDTSKFLALVKHYLFETKVLRKCNLLQLQCLILLRFLHWCAPEDGDGPETQYCQILMGTIISSCKEMGINWYCFSHPEKYSFKINRHTRPSYDIMKPSDYISVFRKIWSYVLFWDRKMCFISGEECQIGKTLQCHFKEEADTPTWYIRMLTLDNLMKKINDTLNDDPGKVDLNLLHRLINDLKRNFHILKSLSKNEKETMRHFDFEMEWIIDLFSLSLLHGEMIFYEYDCNITKFYKSFQDLWDMVIHISEKCYNYFFNSDALEVDSLTKFYTNRIVEIVANKVLVIVPAFILRGDRFKTIQYADKKKMIEFLYGVSSVYFNEFGFEYYRCFRKMFTAKIAYKILNRSCEKDAWRIILNFLLNELKLEDNGDSYIDYNDMRLKDICPIILEFQETVQKYDGYRPDILSIWNNEFYPIGKYNDDMTGFKFQMRIKEMQEFLDMEKYSDRFNIFSSFYDHASSQLAKHTEVDTNISITNEQVAETPQKELLQQPLAPALPVNDLIVSEFDVIEDIFDPVDFVSFF</sequence>
<comment type="function">
    <text evidence="1">Transcriptional inhibitor with a significantly increased number of target genes in response to oleate.</text>
</comment>
<comment type="subcellular location">
    <subcellularLocation>
        <location evidence="1">Cytoplasm</location>
    </subcellularLocation>
    <subcellularLocation>
        <location evidence="2">Nucleus</location>
    </subcellularLocation>
    <subcellularLocation>
        <location evidence="1">Mitochondrion</location>
    </subcellularLocation>
</comment>
<comment type="similarity">
    <text evidence="4">Belongs to the OAF3 family.</text>
</comment>
<feature type="chain" id="PRO_0000409043" description="Oleate activated transcription factor 3">
    <location>
        <begin position="1"/>
        <end position="861"/>
    </location>
</feature>
<feature type="DNA-binding region" description="Zn(2)-C6 fungal-type" evidence="2">
    <location>
        <begin position="19"/>
        <end position="47"/>
    </location>
</feature>
<feature type="region of interest" description="Disordered" evidence="3">
    <location>
        <begin position="52"/>
        <end position="99"/>
    </location>
</feature>
<feature type="compositionally biased region" description="Polar residues" evidence="3">
    <location>
        <begin position="52"/>
        <end position="61"/>
    </location>
</feature>